<evidence type="ECO:0000250" key="1">
    <source>
        <dbReference type="UniProtKB" id="P04698"/>
    </source>
</evidence>
<evidence type="ECO:0000305" key="2"/>
<proteinExistence type="evidence at transcript level"/>
<accession>P06675</accession>
<dbReference type="EMBL" id="M12143">
    <property type="protein sequence ID" value="AAA33527.1"/>
    <property type="molecule type" value="mRNA"/>
</dbReference>
<dbReference type="PIR" id="E24557">
    <property type="entry name" value="ZIZMB1"/>
</dbReference>
<dbReference type="STRING" id="4577.P06675"/>
<dbReference type="PaxDb" id="4577-GRMZM2G059620_P03"/>
<dbReference type="MaizeGDB" id="58096"/>
<dbReference type="eggNOG" id="ENOG502R4CQ">
    <property type="taxonomic scope" value="Eukaryota"/>
</dbReference>
<dbReference type="InParanoid" id="P06675"/>
<dbReference type="Proteomes" id="UP000007305">
    <property type="component" value="Unplaced"/>
</dbReference>
<dbReference type="ExpressionAtlas" id="P06675">
    <property type="expression patterns" value="baseline and differential"/>
</dbReference>
<dbReference type="GO" id="GO:0045735">
    <property type="term" value="F:nutrient reservoir activity"/>
    <property type="evidence" value="ECO:0007669"/>
    <property type="project" value="UniProtKB-KW"/>
</dbReference>
<dbReference type="InterPro" id="IPR002530">
    <property type="entry name" value="Zein"/>
</dbReference>
<dbReference type="InterPro" id="IPR051903">
    <property type="entry name" value="Zein-alpha"/>
</dbReference>
<dbReference type="PANTHER" id="PTHR48214">
    <property type="entry name" value="ZEIN-ALPHA PMS2"/>
    <property type="match status" value="1"/>
</dbReference>
<dbReference type="PANTHER" id="PTHR48214:SF1">
    <property type="entry name" value="ZEIN-ALPHA PMS2"/>
    <property type="match status" value="1"/>
</dbReference>
<dbReference type="Pfam" id="PF01559">
    <property type="entry name" value="Zein"/>
    <property type="match status" value="2"/>
</dbReference>
<organism>
    <name type="scientific">Zea mays</name>
    <name type="common">Maize</name>
    <dbReference type="NCBI Taxonomy" id="4577"/>
    <lineage>
        <taxon>Eukaryota</taxon>
        <taxon>Viridiplantae</taxon>
        <taxon>Streptophyta</taxon>
        <taxon>Embryophyta</taxon>
        <taxon>Tracheophyta</taxon>
        <taxon>Spermatophyta</taxon>
        <taxon>Magnoliopsida</taxon>
        <taxon>Liliopsida</taxon>
        <taxon>Poales</taxon>
        <taxon>Poaceae</taxon>
        <taxon>PACMAD clade</taxon>
        <taxon>Panicoideae</taxon>
        <taxon>Andropogonodae</taxon>
        <taxon>Andropogoneae</taxon>
        <taxon>Tripsacinae</taxon>
        <taxon>Zea</taxon>
    </lineage>
</organism>
<keyword id="KW-1185">Reference proteome</keyword>
<keyword id="KW-0677">Repeat</keyword>
<keyword id="KW-0708">Seed storage protein</keyword>
<keyword id="KW-0732">Signal</keyword>
<keyword id="KW-0758">Storage protein</keyword>
<comment type="function">
    <text>Zeins are major seed storage proteins.</text>
</comment>
<comment type="miscellaneous">
    <text>The alpha zeins of 19 kDa and 22 kDa account for 70% of the total zein fraction. They are encoded by a large multigene family.</text>
</comment>
<comment type="miscellaneous">
    <text evidence="1">Structurally, 22K and 19K zeins are composed of nine adjacent, topologically antiparallel helices clustered within a distorted cylinder.</text>
</comment>
<comment type="similarity">
    <text evidence="2">Belongs to the zein family.</text>
</comment>
<sequence>MAAKIFCLLMLLGLSASAATATIFPQCSQAPIASLLPPYLSSAVSSVCENPILQPYRIQQAIAAGILPLSPLFLQQSSALLQQLPLVHLLAQNIRAQQLQQLVLANLAAYSQQQQFLPFNQLGSLNSASYLQQQQLPFSQLPAAYPQQFLPFNQLAALNSPAYLQQQQLLPFSQLAGVSPATFLTQPQLLPFYQHVAPNAGTLLQLQQLLPFNQLALTNPAVFYQQPIIGGALF</sequence>
<reference key="1">
    <citation type="journal article" date="1985" name="J. Biol. Chem.">
        <title>Nucleotide sequence analysis of zein mRNAs from maize endosperm.</title>
        <authorList>
            <person name="Marks M.D."/>
            <person name="Lindell J.S."/>
            <person name="Larkins B.A."/>
        </authorList>
    </citation>
    <scope>NUCLEOTIDE SEQUENCE [MRNA]</scope>
</reference>
<feature type="signal peptide">
    <location>
        <begin position="1"/>
        <end position="21"/>
    </location>
</feature>
<feature type="chain" id="PRO_0000041614" description="Zein-alpha 19B1">
    <location>
        <begin position="22"/>
        <end position="234"/>
    </location>
</feature>
<name>ZEA4_MAIZE</name>
<protein>
    <recommendedName>
        <fullName>Zein-alpha 19B1</fullName>
    </recommendedName>
    <alternativeName>
        <fullName>19 kDa zein 19B1</fullName>
    </alternativeName>
</protein>